<feature type="chain" id="PRO_0000380046" description="GTP-dependent dephospho-CoA kinase">
    <location>
        <begin position="1"/>
        <end position="192"/>
    </location>
</feature>
<feature type="binding site" evidence="1">
    <location>
        <position position="49"/>
    </location>
    <ligand>
        <name>GTP</name>
        <dbReference type="ChEBI" id="CHEBI:37565"/>
    </ligand>
</feature>
<feature type="binding site" evidence="1">
    <location>
        <position position="50"/>
    </location>
    <ligand>
        <name>GTP</name>
        <dbReference type="ChEBI" id="CHEBI:37565"/>
    </ligand>
</feature>
<feature type="binding site" evidence="1">
    <location>
        <position position="51"/>
    </location>
    <ligand>
        <name>GTP</name>
        <dbReference type="ChEBI" id="CHEBI:37565"/>
    </ligand>
</feature>
<feature type="binding site" evidence="1">
    <location>
        <position position="68"/>
    </location>
    <ligand>
        <name>GTP</name>
        <dbReference type="ChEBI" id="CHEBI:37565"/>
    </ligand>
</feature>
<feature type="binding site" evidence="1">
    <location>
        <position position="70"/>
    </location>
    <ligand>
        <name>GTP</name>
        <dbReference type="ChEBI" id="CHEBI:37565"/>
    </ligand>
</feature>
<feature type="binding site" evidence="1">
    <location>
        <position position="127"/>
    </location>
    <ligand>
        <name>GTP</name>
        <dbReference type="ChEBI" id="CHEBI:37565"/>
    </ligand>
</feature>
<gene>
    <name type="ordered locus">Hlac_2394</name>
</gene>
<name>DPCKG_HALLT</name>
<dbReference type="EC" id="2.7.1.237" evidence="1"/>
<dbReference type="EMBL" id="CP001365">
    <property type="protein sequence ID" value="ACM57969.1"/>
    <property type="molecule type" value="Genomic_DNA"/>
</dbReference>
<dbReference type="RefSeq" id="WP_015911089.1">
    <property type="nucleotide sequence ID" value="NC_012029.1"/>
</dbReference>
<dbReference type="SMR" id="B9LSM2"/>
<dbReference type="GeneID" id="7400512"/>
<dbReference type="KEGG" id="hla:Hlac_2394"/>
<dbReference type="eggNOG" id="arCOG04076">
    <property type="taxonomic scope" value="Archaea"/>
</dbReference>
<dbReference type="HOGENOM" id="CLU_120795_0_0_2"/>
<dbReference type="UniPathway" id="UPA00241"/>
<dbReference type="Proteomes" id="UP000000740">
    <property type="component" value="Chromosome 1"/>
</dbReference>
<dbReference type="GO" id="GO:0005525">
    <property type="term" value="F:GTP binding"/>
    <property type="evidence" value="ECO:0007669"/>
    <property type="project" value="UniProtKB-UniRule"/>
</dbReference>
<dbReference type="GO" id="GO:0016301">
    <property type="term" value="F:kinase activity"/>
    <property type="evidence" value="ECO:0007669"/>
    <property type="project" value="UniProtKB-UniRule"/>
</dbReference>
<dbReference type="GO" id="GO:0015937">
    <property type="term" value="P:coenzyme A biosynthetic process"/>
    <property type="evidence" value="ECO:0007669"/>
    <property type="project" value="UniProtKB-UniRule"/>
</dbReference>
<dbReference type="HAMAP" id="MF_00590">
    <property type="entry name" value="Dephospho_CoA_kinase_GTP_dep"/>
    <property type="match status" value="1"/>
</dbReference>
<dbReference type="InterPro" id="IPR007164">
    <property type="entry name" value="GTP-dep_dephospho-CoA_kin"/>
</dbReference>
<dbReference type="PANTHER" id="PTHR40732:SF1">
    <property type="entry name" value="GTP-DEPENDENT DEPHOSPHO-COA KINASE"/>
    <property type="match status" value="1"/>
</dbReference>
<dbReference type="PANTHER" id="PTHR40732">
    <property type="entry name" value="UPF0218 PROTEIN TK1697"/>
    <property type="match status" value="1"/>
</dbReference>
<dbReference type="Pfam" id="PF04019">
    <property type="entry name" value="DUF359"/>
    <property type="match status" value="1"/>
</dbReference>
<dbReference type="PIRSF" id="PIRSF006533">
    <property type="entry name" value="UCP006533"/>
    <property type="match status" value="1"/>
</dbReference>
<protein>
    <recommendedName>
        <fullName evidence="1">GTP-dependent dephospho-CoA kinase</fullName>
        <ecNumber evidence="1">2.7.1.237</ecNumber>
    </recommendedName>
    <alternativeName>
        <fullName evidence="1">Dephospho-coenzyme A kinase</fullName>
        <shortName evidence="1">DPCK</shortName>
    </alternativeName>
</protein>
<reference key="1">
    <citation type="journal article" date="2016" name="Stand. Genomic Sci.">
        <title>Complete genome sequence of the Antarctic Halorubrum lacusprofundi type strain ACAM 34.</title>
        <authorList>
            <person name="Anderson I.J."/>
            <person name="DasSarma P."/>
            <person name="Lucas S."/>
            <person name="Copeland A."/>
            <person name="Lapidus A."/>
            <person name="Del Rio T.G."/>
            <person name="Tice H."/>
            <person name="Dalin E."/>
            <person name="Bruce D.C."/>
            <person name="Goodwin L."/>
            <person name="Pitluck S."/>
            <person name="Sims D."/>
            <person name="Brettin T.S."/>
            <person name="Detter J.C."/>
            <person name="Han C.S."/>
            <person name="Larimer F."/>
            <person name="Hauser L."/>
            <person name="Land M."/>
            <person name="Ivanova N."/>
            <person name="Richardson P."/>
            <person name="Cavicchioli R."/>
            <person name="DasSarma S."/>
            <person name="Woese C.R."/>
            <person name="Kyrpides N.C."/>
        </authorList>
    </citation>
    <scope>NUCLEOTIDE SEQUENCE [LARGE SCALE GENOMIC DNA]</scope>
    <source>
        <strain>ATCC 49239 / DSM 5036 / JCM 8891 / ACAM 34</strain>
    </source>
</reference>
<keyword id="KW-0173">Coenzyme A biosynthesis</keyword>
<keyword id="KW-0342">GTP-binding</keyword>
<keyword id="KW-0418">Kinase</keyword>
<keyword id="KW-0547">Nucleotide-binding</keyword>
<keyword id="KW-1185">Reference proteome</keyword>
<keyword id="KW-0808">Transferase</keyword>
<evidence type="ECO:0000255" key="1">
    <source>
        <dbReference type="HAMAP-Rule" id="MF_00590"/>
    </source>
</evidence>
<sequence>MLTLPESLRDAFKEPLGPVTIDADELLAAAAETRGERAAPDAPIIAVGDVVTYHLREAGRVPDVALIDGKTERETVDAEIGSALAAADDRRLSVENPAASLSAELLEALSEALSDADPVIIEVTGEEDLAALPAILAAPDGASVVYGQPGEGMVRVAVTPESRTEARELFEALDGDVEAAYKALGRVPDGDR</sequence>
<organism>
    <name type="scientific">Halorubrum lacusprofundi (strain ATCC 49239 / DSM 5036 / JCM 8891 / ACAM 34)</name>
    <dbReference type="NCBI Taxonomy" id="416348"/>
    <lineage>
        <taxon>Archaea</taxon>
        <taxon>Methanobacteriati</taxon>
        <taxon>Methanobacteriota</taxon>
        <taxon>Stenosarchaea group</taxon>
        <taxon>Halobacteria</taxon>
        <taxon>Halobacteriales</taxon>
        <taxon>Haloferacaceae</taxon>
        <taxon>Halorubrum</taxon>
    </lineage>
</organism>
<accession>B9LSM2</accession>
<proteinExistence type="inferred from homology"/>
<comment type="function">
    <text evidence="1">Catalyzes the GTP-dependent phosphorylation of the 3'-hydroxyl group of dephosphocoenzyme A to form coenzyme A (CoA).</text>
</comment>
<comment type="catalytic activity">
    <reaction evidence="1">
        <text>3'-dephospho-CoA + GTP = GDP + CoA + H(+)</text>
        <dbReference type="Rhea" id="RHEA:61156"/>
        <dbReference type="ChEBI" id="CHEBI:15378"/>
        <dbReference type="ChEBI" id="CHEBI:37565"/>
        <dbReference type="ChEBI" id="CHEBI:57287"/>
        <dbReference type="ChEBI" id="CHEBI:57328"/>
        <dbReference type="ChEBI" id="CHEBI:58189"/>
        <dbReference type="EC" id="2.7.1.237"/>
    </reaction>
</comment>
<comment type="pathway">
    <text evidence="1">Cofactor biosynthesis; coenzyme A biosynthesis.</text>
</comment>
<comment type="similarity">
    <text evidence="1">Belongs to the GTP-dependent DPCK family.</text>
</comment>